<accession>Q4ZIN3</accession>
<accession>O60392</accession>
<accession>Q8NF79</accession>
<accession>Q96H30</accession>
<protein>
    <recommendedName>
        <fullName>Membralin</fullName>
    </recommendedName>
    <alternativeName>
        <fullName>Transmembrane protein 259</fullName>
    </alternativeName>
</protein>
<name>MBRL_HUMAN</name>
<gene>
    <name type="primary">TMEM259</name>
    <name type="synonym">C19orf6</name>
</gene>
<feature type="initiator methionine" description="Removed" evidence="9">
    <location>
        <position position="1"/>
    </location>
</feature>
<feature type="chain" id="PRO_0000096273" description="Membralin">
    <location>
        <begin position="2"/>
        <end position="620"/>
    </location>
</feature>
<feature type="transmembrane region" description="Helical" evidence="2">
    <location>
        <begin position="70"/>
        <end position="90"/>
    </location>
</feature>
<feature type="transmembrane region" description="Helical" evidence="2">
    <location>
        <begin position="302"/>
        <end position="322"/>
    </location>
</feature>
<feature type="transmembrane region" description="Helical" evidence="2">
    <location>
        <begin position="346"/>
        <end position="366"/>
    </location>
</feature>
<feature type="transmembrane region" description="Helical" evidence="2">
    <location>
        <begin position="426"/>
        <end position="446"/>
    </location>
</feature>
<feature type="region of interest" description="Disordered" evidence="3">
    <location>
        <begin position="1"/>
        <end position="33"/>
    </location>
</feature>
<feature type="region of interest" description="Disordered" evidence="3">
    <location>
        <begin position="474"/>
        <end position="517"/>
    </location>
</feature>
<feature type="region of interest" description="Disordered" evidence="3">
    <location>
        <begin position="568"/>
        <end position="620"/>
    </location>
</feature>
<feature type="compositionally biased region" description="Low complexity" evidence="3">
    <location>
        <begin position="22"/>
        <end position="31"/>
    </location>
</feature>
<feature type="compositionally biased region" description="Low complexity" evidence="3">
    <location>
        <begin position="499"/>
        <end position="517"/>
    </location>
</feature>
<feature type="compositionally biased region" description="Low complexity" evidence="3">
    <location>
        <begin position="568"/>
        <end position="593"/>
    </location>
</feature>
<feature type="modified residue" description="N-acetylserine" evidence="9">
    <location>
        <position position="2"/>
    </location>
</feature>
<feature type="modified residue" description="Phosphothreonine" evidence="10">
    <location>
        <position position="29"/>
    </location>
</feature>
<feature type="glycosylation site" description="N-linked (GlcNAc...) asparagine" evidence="4">
    <location>
        <position position="189"/>
    </location>
</feature>
<feature type="splice variant" id="VSP_014377" description="In isoform 2." evidence="5 6 7">
    <original>FF</original>
    <variation>IP</variation>
    <location>
        <begin position="407"/>
        <end position="408"/>
    </location>
</feature>
<feature type="splice variant" id="VSP_014378" description="In isoform 2." evidence="5 6 7">
    <location>
        <begin position="409"/>
        <end position="620"/>
    </location>
</feature>
<keyword id="KW-0007">Acetylation</keyword>
<keyword id="KW-0025">Alternative splicing</keyword>
<keyword id="KW-0256">Endoplasmic reticulum</keyword>
<keyword id="KW-0325">Glycoprotein</keyword>
<keyword id="KW-0472">Membrane</keyword>
<keyword id="KW-0597">Phosphoprotein</keyword>
<keyword id="KW-1267">Proteomics identification</keyword>
<keyword id="KW-1185">Reference proteome</keyword>
<keyword id="KW-0812">Transmembrane</keyword>
<keyword id="KW-1133">Transmembrane helix</keyword>
<proteinExistence type="evidence at protein level"/>
<evidence type="ECO:0000250" key="1">
    <source>
        <dbReference type="UniProtKB" id="Q8CIV2"/>
    </source>
</evidence>
<evidence type="ECO:0000255" key="2"/>
<evidence type="ECO:0000256" key="3">
    <source>
        <dbReference type="SAM" id="MobiDB-lite"/>
    </source>
</evidence>
<evidence type="ECO:0000269" key="4">
    <source>
    </source>
</evidence>
<evidence type="ECO:0000303" key="5">
    <source>
    </source>
</evidence>
<evidence type="ECO:0000303" key="6">
    <source>
    </source>
</evidence>
<evidence type="ECO:0000303" key="7">
    <source>
    </source>
</evidence>
<evidence type="ECO:0000305" key="8"/>
<evidence type="ECO:0007744" key="9">
    <source>
    </source>
</evidence>
<evidence type="ECO:0007744" key="10">
    <source>
    </source>
</evidence>
<sequence length="620" mass="67889">MSEHVEPAAPGPGPNGGGGGPAPARGPRTPNLNPNPLINVRDRLFHALFFKMAVTYSRLFPPAFRRLFEFFVLLKALFVLFVLAYIHIVFSRSPINCLEHVRDKWPREGILRVEVRHNSSRAPVFLQFCDSGGRGSFPGLAVEPGSNLDMEDEEEEELTMEMFGNSSIKFELDIEPKVFKPPSSTEALNDSQEFPFPETPTKVWPQDEYIVEYSLEYGFLRLSQATRQRLSIPVMVVTLDPTRDQCFGDRFSRLLLDEFLGYDDILMSSVKGLAENEENKGFLRNVVSGEHYRFVSMWMARTSYLAAFAIMVIFTLSVSMLLRYSHHQIFVFIVDLLQMLEMNMAIAFPAAPLLTVILALVGMEAIMSEFFNDTTTAFYIILIVWLADQYDAICCHTSTSKRHWLRFFYLYHFAFYAYHYRFNGQYSSLALVTSWLFIQHSMIYFFHHYELPAILQQVRIQEMLLQAPPLGPGTPTALPDDMNNNSGAPATAPDSAGQPPALGPVSPGASGSPGPVAAAPSSLVAAAASVAAAAGGDLGWMAETAAIITDASFLSGLSASLLERRPASPLGPAGGLPHAPQDSVPPSDSAASDTTPLGAAVGGPSPASMAPTEAPSEVGS</sequence>
<organism>
    <name type="scientific">Homo sapiens</name>
    <name type="common">Human</name>
    <dbReference type="NCBI Taxonomy" id="9606"/>
    <lineage>
        <taxon>Eukaryota</taxon>
        <taxon>Metazoa</taxon>
        <taxon>Chordata</taxon>
        <taxon>Craniata</taxon>
        <taxon>Vertebrata</taxon>
        <taxon>Euteleostomi</taxon>
        <taxon>Mammalia</taxon>
        <taxon>Eutheria</taxon>
        <taxon>Euarchontoglires</taxon>
        <taxon>Primates</taxon>
        <taxon>Haplorrhini</taxon>
        <taxon>Catarrhini</taxon>
        <taxon>Hominidae</taxon>
        <taxon>Homo</taxon>
    </lineage>
</organism>
<dbReference type="EMBL" id="DQ005958">
    <property type="protein sequence ID" value="AAY27747.1"/>
    <property type="molecule type" value="mRNA"/>
</dbReference>
<dbReference type="EMBL" id="AC004528">
    <property type="protein sequence ID" value="AAC12681.1"/>
    <property type="status" value="ALT_SEQ"/>
    <property type="molecule type" value="Genomic_DNA"/>
</dbReference>
<dbReference type="EMBL" id="BC008957">
    <property type="protein sequence ID" value="AAH08957.1"/>
    <property type="molecule type" value="mRNA"/>
</dbReference>
<dbReference type="EMBL" id="AK090400">
    <property type="protein sequence ID" value="BAC03381.1"/>
    <property type="molecule type" value="mRNA"/>
</dbReference>
<dbReference type="CCDS" id="CCDS12052.1">
    <molecule id="Q4ZIN3-2"/>
</dbReference>
<dbReference type="CCDS" id="CCDS32862.1">
    <molecule id="Q4ZIN3-1"/>
</dbReference>
<dbReference type="RefSeq" id="NP_001028198.1">
    <molecule id="Q4ZIN3-1"/>
    <property type="nucleotide sequence ID" value="NM_001033026.2"/>
</dbReference>
<dbReference type="RefSeq" id="NP_219488.1">
    <molecule id="Q4ZIN3-2"/>
    <property type="nucleotide sequence ID" value="NM_033420.4"/>
</dbReference>
<dbReference type="BioGRID" id="124814">
    <property type="interactions" value="144"/>
</dbReference>
<dbReference type="FunCoup" id="Q4ZIN3">
    <property type="interactions" value="1150"/>
</dbReference>
<dbReference type="IntAct" id="Q4ZIN3">
    <property type="interactions" value="69"/>
</dbReference>
<dbReference type="MINT" id="Q4ZIN3"/>
<dbReference type="STRING" id="9606.ENSP00000349087"/>
<dbReference type="GlyCosmos" id="Q4ZIN3">
    <property type="glycosylation" value="1 site, No reported glycans"/>
</dbReference>
<dbReference type="GlyGen" id="Q4ZIN3">
    <property type="glycosylation" value="1 site, 7 N-linked glycans (1 site)"/>
</dbReference>
<dbReference type="iPTMnet" id="Q4ZIN3"/>
<dbReference type="PhosphoSitePlus" id="Q4ZIN3"/>
<dbReference type="SwissPalm" id="Q4ZIN3"/>
<dbReference type="BioMuta" id="TMEM259"/>
<dbReference type="DMDM" id="68565394"/>
<dbReference type="jPOST" id="Q4ZIN3"/>
<dbReference type="MassIVE" id="Q4ZIN3"/>
<dbReference type="PaxDb" id="9606-ENSP00000349087"/>
<dbReference type="PeptideAtlas" id="Q4ZIN3"/>
<dbReference type="ProteomicsDB" id="62384">
    <molecule id="Q4ZIN3-1"/>
</dbReference>
<dbReference type="ProteomicsDB" id="62385">
    <molecule id="Q4ZIN3-2"/>
</dbReference>
<dbReference type="Pumba" id="Q4ZIN3"/>
<dbReference type="Antibodypedia" id="10308">
    <property type="antibodies" value="67 antibodies from 17 providers"/>
</dbReference>
<dbReference type="DNASU" id="91304"/>
<dbReference type="Ensembl" id="ENST00000333175.9">
    <molecule id="Q4ZIN3-2"/>
    <property type="protein sequence ID" value="ENSP00000331423.4"/>
    <property type="gene ID" value="ENSG00000182087.14"/>
</dbReference>
<dbReference type="Ensembl" id="ENST00000356663.8">
    <molecule id="Q4ZIN3-1"/>
    <property type="protein sequence ID" value="ENSP00000349087.2"/>
    <property type="gene ID" value="ENSG00000182087.14"/>
</dbReference>
<dbReference type="GeneID" id="91304"/>
<dbReference type="KEGG" id="hsa:91304"/>
<dbReference type="MANE-Select" id="ENST00000356663.8">
    <property type="protein sequence ID" value="ENSP00000349087.2"/>
    <property type="RefSeq nucleotide sequence ID" value="NM_001033026.2"/>
    <property type="RefSeq protein sequence ID" value="NP_001028198.1"/>
</dbReference>
<dbReference type="UCSC" id="uc002lqr.2">
    <molecule id="Q4ZIN3-1"/>
    <property type="organism name" value="human"/>
</dbReference>
<dbReference type="AGR" id="HGNC:17039"/>
<dbReference type="CTD" id="91304"/>
<dbReference type="DisGeNET" id="91304"/>
<dbReference type="GeneCards" id="TMEM259"/>
<dbReference type="HGNC" id="HGNC:17039">
    <property type="gene designation" value="TMEM259"/>
</dbReference>
<dbReference type="HPA" id="ENSG00000182087">
    <property type="expression patterns" value="Low tissue specificity"/>
</dbReference>
<dbReference type="MIM" id="611011">
    <property type="type" value="gene"/>
</dbReference>
<dbReference type="neXtProt" id="NX_Q4ZIN3"/>
<dbReference type="OpenTargets" id="ENSG00000182087"/>
<dbReference type="PharmGKB" id="PA134936083"/>
<dbReference type="VEuPathDB" id="HostDB:ENSG00000182087"/>
<dbReference type="eggNOG" id="KOG2092">
    <property type="taxonomic scope" value="Eukaryota"/>
</dbReference>
<dbReference type="GeneTree" id="ENSGT00390000013329"/>
<dbReference type="HOGENOM" id="CLU_019069_2_1_1"/>
<dbReference type="InParanoid" id="Q4ZIN3"/>
<dbReference type="OMA" id="TELPHND"/>
<dbReference type="OrthoDB" id="6779347at2759"/>
<dbReference type="PAN-GO" id="Q4ZIN3">
    <property type="GO annotations" value="3 GO annotations based on evolutionary models"/>
</dbReference>
<dbReference type="PhylomeDB" id="Q4ZIN3"/>
<dbReference type="TreeFam" id="TF313323"/>
<dbReference type="PathwayCommons" id="Q4ZIN3"/>
<dbReference type="SignaLink" id="Q4ZIN3"/>
<dbReference type="BioGRID-ORCS" id="91304">
    <property type="hits" value="36 hits in 1156 CRISPR screens"/>
</dbReference>
<dbReference type="ChiTaRS" id="TMEM259">
    <property type="organism name" value="human"/>
</dbReference>
<dbReference type="GenomeRNAi" id="91304"/>
<dbReference type="Pharos" id="Q4ZIN3">
    <property type="development level" value="Tbio"/>
</dbReference>
<dbReference type="PRO" id="PR:Q4ZIN3"/>
<dbReference type="Proteomes" id="UP000005640">
    <property type="component" value="Chromosome 19"/>
</dbReference>
<dbReference type="RNAct" id="Q4ZIN3">
    <property type="molecule type" value="protein"/>
</dbReference>
<dbReference type="Bgee" id="ENSG00000182087">
    <property type="expression patterns" value="Expressed in adenohypophysis and 174 other cell types or tissues"/>
</dbReference>
<dbReference type="ExpressionAtlas" id="Q4ZIN3">
    <property type="expression patterns" value="baseline and differential"/>
</dbReference>
<dbReference type="GO" id="GO:0005783">
    <property type="term" value="C:endoplasmic reticulum"/>
    <property type="evidence" value="ECO:0000318"/>
    <property type="project" value="GO_Central"/>
</dbReference>
<dbReference type="GO" id="GO:0005789">
    <property type="term" value="C:endoplasmic reticulum membrane"/>
    <property type="evidence" value="ECO:0007669"/>
    <property type="project" value="UniProtKB-SubCell"/>
</dbReference>
<dbReference type="GO" id="GO:1904294">
    <property type="term" value="P:positive regulation of ERAD pathway"/>
    <property type="evidence" value="ECO:0000318"/>
    <property type="project" value="GO_Central"/>
</dbReference>
<dbReference type="GO" id="GO:0034976">
    <property type="term" value="P:response to endoplasmic reticulum stress"/>
    <property type="evidence" value="ECO:0000318"/>
    <property type="project" value="GO_Central"/>
</dbReference>
<dbReference type="InterPro" id="IPR019144">
    <property type="entry name" value="Membralin"/>
</dbReference>
<dbReference type="PANTHER" id="PTHR21650:SF4">
    <property type="entry name" value="MEMBRALIN"/>
    <property type="match status" value="1"/>
</dbReference>
<dbReference type="PANTHER" id="PTHR21650">
    <property type="entry name" value="MEMBRALIN/KINETOCHORE PROTEIN NUF2"/>
    <property type="match status" value="1"/>
</dbReference>
<dbReference type="Pfam" id="PF09746">
    <property type="entry name" value="Membralin"/>
    <property type="match status" value="1"/>
</dbReference>
<reference key="1">
    <citation type="journal article" date="2002" name="Gene Expr. Patterns">
        <title>Characterization and expression of the gene encoding membralin, an evolutionary conserved protein expressed in the central nervous system.</title>
        <authorList>
            <person name="Andersson O."/>
            <person name="von Euler G."/>
        </authorList>
    </citation>
    <scope>NUCLEOTIDE SEQUENCE [MRNA] (ISOFORMS 1 AND 2)</scope>
</reference>
<reference key="2">
    <citation type="journal article" date="2005" name="Biochim. Biophys. Acta">
        <title>Identification and characterization of membralin, a novel tumor-associated gene, in ovarian carcinoma.</title>
        <authorList>
            <person name="Chen Y.-C."/>
            <person name="Davidson B."/>
            <person name="Cheng C.-C."/>
            <person name="Maitra A."/>
            <person name="Giuntoli R.L. II"/>
            <person name="Hruban R.H."/>
            <person name="Wang T.-L."/>
            <person name="Shih I.-M."/>
        </authorList>
    </citation>
    <scope>NUCLEOTIDE SEQUENCE [MRNA] (ISOFORMS 1 AND 2)</scope>
    <scope>ALTERNATIVE SPLICING</scope>
    <source>
        <tissue>Mammary carcinoma</tissue>
        <tissue>Ovarian carcinoma</tissue>
    </source>
</reference>
<reference key="3">
    <citation type="journal article" date="2004" name="Nature">
        <title>The DNA sequence and biology of human chromosome 19.</title>
        <authorList>
            <person name="Grimwood J."/>
            <person name="Gordon L.A."/>
            <person name="Olsen A.S."/>
            <person name="Terry A."/>
            <person name="Schmutz J."/>
            <person name="Lamerdin J.E."/>
            <person name="Hellsten U."/>
            <person name="Goodstein D."/>
            <person name="Couronne O."/>
            <person name="Tran-Gyamfi M."/>
            <person name="Aerts A."/>
            <person name="Altherr M."/>
            <person name="Ashworth L."/>
            <person name="Bajorek E."/>
            <person name="Black S."/>
            <person name="Branscomb E."/>
            <person name="Caenepeel S."/>
            <person name="Carrano A.V."/>
            <person name="Caoile C."/>
            <person name="Chan Y.M."/>
            <person name="Christensen M."/>
            <person name="Cleland C.A."/>
            <person name="Copeland A."/>
            <person name="Dalin E."/>
            <person name="Dehal P."/>
            <person name="Denys M."/>
            <person name="Detter J.C."/>
            <person name="Escobar J."/>
            <person name="Flowers D."/>
            <person name="Fotopulos D."/>
            <person name="Garcia C."/>
            <person name="Georgescu A.M."/>
            <person name="Glavina T."/>
            <person name="Gomez M."/>
            <person name="Gonzales E."/>
            <person name="Groza M."/>
            <person name="Hammon N."/>
            <person name="Hawkins T."/>
            <person name="Haydu L."/>
            <person name="Ho I."/>
            <person name="Huang W."/>
            <person name="Israni S."/>
            <person name="Jett J."/>
            <person name="Kadner K."/>
            <person name="Kimball H."/>
            <person name="Kobayashi A."/>
            <person name="Larionov V."/>
            <person name="Leem S.-H."/>
            <person name="Lopez F."/>
            <person name="Lou Y."/>
            <person name="Lowry S."/>
            <person name="Malfatti S."/>
            <person name="Martinez D."/>
            <person name="McCready P.M."/>
            <person name="Medina C."/>
            <person name="Morgan J."/>
            <person name="Nelson K."/>
            <person name="Nolan M."/>
            <person name="Ovcharenko I."/>
            <person name="Pitluck S."/>
            <person name="Pollard M."/>
            <person name="Popkie A.P."/>
            <person name="Predki P."/>
            <person name="Quan G."/>
            <person name="Ramirez L."/>
            <person name="Rash S."/>
            <person name="Retterer J."/>
            <person name="Rodriguez A."/>
            <person name="Rogers S."/>
            <person name="Salamov A."/>
            <person name="Salazar A."/>
            <person name="She X."/>
            <person name="Smith D."/>
            <person name="Slezak T."/>
            <person name="Solovyev V."/>
            <person name="Thayer N."/>
            <person name="Tice H."/>
            <person name="Tsai M."/>
            <person name="Ustaszewska A."/>
            <person name="Vo N."/>
            <person name="Wagner M."/>
            <person name="Wheeler J."/>
            <person name="Wu K."/>
            <person name="Xie G."/>
            <person name="Yang J."/>
            <person name="Dubchak I."/>
            <person name="Furey T.S."/>
            <person name="DeJong P."/>
            <person name="Dickson M."/>
            <person name="Gordon D."/>
            <person name="Eichler E.E."/>
            <person name="Pennacchio L.A."/>
            <person name="Richardson P."/>
            <person name="Stubbs L."/>
            <person name="Rokhsar D.S."/>
            <person name="Myers R.M."/>
            <person name="Rubin E.M."/>
            <person name="Lucas S.M."/>
        </authorList>
    </citation>
    <scope>NUCLEOTIDE SEQUENCE [LARGE SCALE GENOMIC DNA]</scope>
</reference>
<reference key="4">
    <citation type="journal article" date="2004" name="Genome Res.">
        <title>The status, quality, and expansion of the NIH full-length cDNA project: the Mammalian Gene Collection (MGC).</title>
        <authorList>
            <consortium name="The MGC Project Team"/>
        </authorList>
    </citation>
    <scope>NUCLEOTIDE SEQUENCE [LARGE SCALE MRNA] (ISOFORM 2)</scope>
    <source>
        <tissue>Muscle</tissue>
    </source>
</reference>
<reference key="5">
    <citation type="journal article" date="2004" name="Nat. Genet.">
        <title>Complete sequencing and characterization of 21,243 full-length human cDNAs.</title>
        <authorList>
            <person name="Ota T."/>
            <person name="Suzuki Y."/>
            <person name="Nishikawa T."/>
            <person name="Otsuki T."/>
            <person name="Sugiyama T."/>
            <person name="Irie R."/>
            <person name="Wakamatsu A."/>
            <person name="Hayashi K."/>
            <person name="Sato H."/>
            <person name="Nagai K."/>
            <person name="Kimura K."/>
            <person name="Makita H."/>
            <person name="Sekine M."/>
            <person name="Obayashi M."/>
            <person name="Nishi T."/>
            <person name="Shibahara T."/>
            <person name="Tanaka T."/>
            <person name="Ishii S."/>
            <person name="Yamamoto J."/>
            <person name="Saito K."/>
            <person name="Kawai Y."/>
            <person name="Isono Y."/>
            <person name="Nakamura Y."/>
            <person name="Nagahari K."/>
            <person name="Murakami K."/>
            <person name="Yasuda T."/>
            <person name="Iwayanagi T."/>
            <person name="Wagatsuma M."/>
            <person name="Shiratori A."/>
            <person name="Sudo H."/>
            <person name="Hosoiri T."/>
            <person name="Kaku Y."/>
            <person name="Kodaira H."/>
            <person name="Kondo H."/>
            <person name="Sugawara M."/>
            <person name="Takahashi M."/>
            <person name="Kanda K."/>
            <person name="Yokoi T."/>
            <person name="Furuya T."/>
            <person name="Kikkawa E."/>
            <person name="Omura Y."/>
            <person name="Abe K."/>
            <person name="Kamihara K."/>
            <person name="Katsuta N."/>
            <person name="Sato K."/>
            <person name="Tanikawa M."/>
            <person name="Yamazaki M."/>
            <person name="Ninomiya K."/>
            <person name="Ishibashi T."/>
            <person name="Yamashita H."/>
            <person name="Murakawa K."/>
            <person name="Fujimori K."/>
            <person name="Tanai H."/>
            <person name="Kimata M."/>
            <person name="Watanabe M."/>
            <person name="Hiraoka S."/>
            <person name="Chiba Y."/>
            <person name="Ishida S."/>
            <person name="Ono Y."/>
            <person name="Takiguchi S."/>
            <person name="Watanabe S."/>
            <person name="Yosida M."/>
            <person name="Hotuta T."/>
            <person name="Kusano J."/>
            <person name="Kanehori K."/>
            <person name="Takahashi-Fujii A."/>
            <person name="Hara H."/>
            <person name="Tanase T.-O."/>
            <person name="Nomura Y."/>
            <person name="Togiya S."/>
            <person name="Komai F."/>
            <person name="Hara R."/>
            <person name="Takeuchi K."/>
            <person name="Arita M."/>
            <person name="Imose N."/>
            <person name="Musashino K."/>
            <person name="Yuuki H."/>
            <person name="Oshima A."/>
            <person name="Sasaki N."/>
            <person name="Aotsuka S."/>
            <person name="Yoshikawa Y."/>
            <person name="Matsunawa H."/>
            <person name="Ichihara T."/>
            <person name="Shiohata N."/>
            <person name="Sano S."/>
            <person name="Moriya S."/>
            <person name="Momiyama H."/>
            <person name="Satoh N."/>
            <person name="Takami S."/>
            <person name="Terashima Y."/>
            <person name="Suzuki O."/>
            <person name="Nakagawa S."/>
            <person name="Senoh A."/>
            <person name="Mizoguchi H."/>
            <person name="Goto Y."/>
            <person name="Shimizu F."/>
            <person name="Wakebe H."/>
            <person name="Hishigaki H."/>
            <person name="Watanabe T."/>
            <person name="Sugiyama A."/>
            <person name="Takemoto M."/>
            <person name="Kawakami B."/>
            <person name="Yamazaki M."/>
            <person name="Watanabe K."/>
            <person name="Kumagai A."/>
            <person name="Itakura S."/>
            <person name="Fukuzumi Y."/>
            <person name="Fujimori Y."/>
            <person name="Komiyama M."/>
            <person name="Tashiro H."/>
            <person name="Tanigami A."/>
            <person name="Fujiwara T."/>
            <person name="Ono T."/>
            <person name="Yamada K."/>
            <person name="Fujii Y."/>
            <person name="Ozaki K."/>
            <person name="Hirao M."/>
            <person name="Ohmori Y."/>
            <person name="Kawabata A."/>
            <person name="Hikiji T."/>
            <person name="Kobatake N."/>
            <person name="Inagaki H."/>
            <person name="Ikema Y."/>
            <person name="Okamoto S."/>
            <person name="Okitani R."/>
            <person name="Kawakami T."/>
            <person name="Noguchi S."/>
            <person name="Itoh T."/>
            <person name="Shigeta K."/>
            <person name="Senba T."/>
            <person name="Matsumura K."/>
            <person name="Nakajima Y."/>
            <person name="Mizuno T."/>
            <person name="Morinaga M."/>
            <person name="Sasaki M."/>
            <person name="Togashi T."/>
            <person name="Oyama M."/>
            <person name="Hata H."/>
            <person name="Watanabe M."/>
            <person name="Komatsu T."/>
            <person name="Mizushima-Sugano J."/>
            <person name="Satoh T."/>
            <person name="Shirai Y."/>
            <person name="Takahashi Y."/>
            <person name="Nakagawa K."/>
            <person name="Okumura K."/>
            <person name="Nagase T."/>
            <person name="Nomura N."/>
            <person name="Kikuchi H."/>
            <person name="Masuho Y."/>
            <person name="Yamashita R."/>
            <person name="Nakai K."/>
            <person name="Yada T."/>
            <person name="Nakamura Y."/>
            <person name="Ohara O."/>
            <person name="Isogai T."/>
            <person name="Sugano S."/>
        </authorList>
    </citation>
    <scope>NUCLEOTIDE SEQUENCE [LARGE SCALE MRNA] OF 264-620 (ISOFORM 1)</scope>
    <source>
        <tissue>Spleen</tissue>
    </source>
</reference>
<reference key="6">
    <citation type="journal article" date="2009" name="J. Proteome Res.">
        <title>Glycoproteomics analysis of human liver tissue by combination of multiple enzyme digestion and hydrazide chemistry.</title>
        <authorList>
            <person name="Chen R."/>
            <person name="Jiang X."/>
            <person name="Sun D."/>
            <person name="Han G."/>
            <person name="Wang F."/>
            <person name="Ye M."/>
            <person name="Wang L."/>
            <person name="Zou H."/>
        </authorList>
    </citation>
    <scope>GLYCOSYLATION [LARGE SCALE ANALYSIS] AT ASN-189</scope>
    <source>
        <tissue>Liver</tissue>
    </source>
</reference>
<reference key="7">
    <citation type="journal article" date="2011" name="BMC Syst. Biol.">
        <title>Initial characterization of the human central proteome.</title>
        <authorList>
            <person name="Burkard T.R."/>
            <person name="Planyavsky M."/>
            <person name="Kaupe I."/>
            <person name="Breitwieser F.P."/>
            <person name="Buerckstuemmer T."/>
            <person name="Bennett K.L."/>
            <person name="Superti-Furga G."/>
            <person name="Colinge J."/>
        </authorList>
    </citation>
    <scope>IDENTIFICATION BY MASS SPECTROMETRY [LARGE SCALE ANALYSIS]</scope>
</reference>
<reference key="8">
    <citation type="journal article" date="2012" name="Mol. Cell. Proteomics">
        <title>Comparative large-scale characterisation of plant vs. mammal proteins reveals similar and idiosyncratic N-alpha acetylation features.</title>
        <authorList>
            <person name="Bienvenut W.V."/>
            <person name="Sumpton D."/>
            <person name="Martinez A."/>
            <person name="Lilla S."/>
            <person name="Espagne C."/>
            <person name="Meinnel T."/>
            <person name="Giglione C."/>
        </authorList>
    </citation>
    <scope>ACETYLATION [LARGE SCALE ANALYSIS] AT SER-2</scope>
    <scope>CLEAVAGE OF INITIATOR METHIONINE [LARGE SCALE ANALYSIS]</scope>
    <scope>IDENTIFICATION BY MASS SPECTROMETRY [LARGE SCALE ANALYSIS]</scope>
</reference>
<reference key="9">
    <citation type="journal article" date="2013" name="J. Proteome Res.">
        <title>Toward a comprehensive characterization of a human cancer cell phosphoproteome.</title>
        <authorList>
            <person name="Zhou H."/>
            <person name="Di Palma S."/>
            <person name="Preisinger C."/>
            <person name="Peng M."/>
            <person name="Polat A.N."/>
            <person name="Heck A.J."/>
            <person name="Mohammed S."/>
        </authorList>
    </citation>
    <scope>PHOSPHORYLATION [LARGE SCALE ANALYSIS] AT THR-29</scope>
    <scope>IDENTIFICATION BY MASS SPECTROMETRY [LARGE SCALE ANALYSIS]</scope>
    <source>
        <tissue>Erythroleukemia</tissue>
    </source>
</reference>
<comment type="function">
    <text evidence="1">May have a role in the ERAD pathway required for clearance of misfolded proteins in the endoplasmic reticulum (ER). Promotes survival of motor neurons, probably by protecting against ER stress.</text>
</comment>
<comment type="subunit">
    <text evidence="1">Interacts with ERLIN2.</text>
</comment>
<comment type="subcellular location">
    <subcellularLocation>
        <location evidence="1">Endoplasmic reticulum membrane</location>
        <topology evidence="2">Multi-pass membrane protein</topology>
    </subcellularLocation>
</comment>
<comment type="alternative products">
    <event type="alternative splicing"/>
    <isoform>
        <id>Q4ZIN3-1</id>
        <name>1</name>
        <name>Long</name>
        <name>Membralin-1</name>
        <sequence type="displayed"/>
    </isoform>
    <isoform>
        <id>Q4ZIN3-2</id>
        <name>2</name>
        <name>Short</name>
        <name>Membralin-2</name>
        <name>Membralin-3</name>
        <sequence type="described" ref="VSP_014377 VSP_014378"/>
    </isoform>
</comment>
<comment type="similarity">
    <text evidence="8">Belongs to the membralin family.</text>
</comment>
<comment type="sequence caution" evidence="8">
    <conflict type="erroneous gene model prediction">
        <sequence resource="EMBL-CDS" id="AAC12681"/>
    </conflict>
</comment>